<accession>C1CPR1</accession>
<keyword id="KW-0131">Cell cycle</keyword>
<keyword id="KW-0132">Cell division</keyword>
<keyword id="KW-0143">Chaperone</keyword>
<keyword id="KW-0963">Cytoplasm</keyword>
<keyword id="KW-0413">Isomerase</keyword>
<keyword id="KW-0697">Rotamase</keyword>
<proteinExistence type="inferred from homology"/>
<evidence type="ECO:0000255" key="1">
    <source>
        <dbReference type="HAMAP-Rule" id="MF_00303"/>
    </source>
</evidence>
<organism>
    <name type="scientific">Streptococcus pneumoniae (strain Taiwan19F-14)</name>
    <dbReference type="NCBI Taxonomy" id="487213"/>
    <lineage>
        <taxon>Bacteria</taxon>
        <taxon>Bacillati</taxon>
        <taxon>Bacillota</taxon>
        <taxon>Bacilli</taxon>
        <taxon>Lactobacillales</taxon>
        <taxon>Streptococcaceae</taxon>
        <taxon>Streptococcus</taxon>
    </lineage>
</organism>
<protein>
    <recommendedName>
        <fullName evidence="1">Trigger factor</fullName>
        <shortName evidence="1">TF</shortName>
        <ecNumber evidence="1">5.2.1.8</ecNumber>
    </recommendedName>
    <alternativeName>
        <fullName evidence="1">PPIase</fullName>
    </alternativeName>
</protein>
<sequence>MSVSFENKETNRGVLTFTISQDQIKPELDRVFKSVKKSLNVPGFRKGHLPRPIFDKKFGEESLYQDVMNALLPNAYEAAVKEAGLEVVAQPKIDVTSMEKGQDWVIAAEVVTKPEVKLGDYKNLEVSVDVEKEVTDADVEERIERERNNLAELVIKEAAAEDGDTVVIDFVGSIDGVEFDGGKGENFSLGLGSGQFIPGFEDQLVGHSAGETVDVIVTFPEDYQAEDLAGKEAKFVTTIHEVKAKEVPALDDELAKDIDEEVETLADLKEKYRKELAAAKEEAYKDAVEGAAIDTAVENAEIVELPEEMIHEEVHRSVNEFLGNLQRQGINPDMYFQITGTTQEDLHNQYQAEAESRTKTNLVIEAVAKAEGFDASEEEIQKEVEQLAADYNMEVAQVQNLLSADMLKHDITIKKAVELITSTATVK</sequence>
<comment type="function">
    <text evidence="1">Involved in protein export. Acts as a chaperone by maintaining the newly synthesized protein in an open conformation. Functions as a peptidyl-prolyl cis-trans isomerase.</text>
</comment>
<comment type="catalytic activity">
    <reaction evidence="1">
        <text>[protein]-peptidylproline (omega=180) = [protein]-peptidylproline (omega=0)</text>
        <dbReference type="Rhea" id="RHEA:16237"/>
        <dbReference type="Rhea" id="RHEA-COMP:10747"/>
        <dbReference type="Rhea" id="RHEA-COMP:10748"/>
        <dbReference type="ChEBI" id="CHEBI:83833"/>
        <dbReference type="ChEBI" id="CHEBI:83834"/>
        <dbReference type="EC" id="5.2.1.8"/>
    </reaction>
</comment>
<comment type="subcellular location">
    <subcellularLocation>
        <location>Cytoplasm</location>
    </subcellularLocation>
    <text evidence="1">About half TF is bound to the ribosome near the polypeptide exit tunnel while the other half is free in the cytoplasm.</text>
</comment>
<comment type="domain">
    <text evidence="1">Consists of 3 domains; the N-terminus binds the ribosome, the middle domain has PPIase activity, while the C-terminus has intrinsic chaperone activity on its own.</text>
</comment>
<comment type="similarity">
    <text evidence="1">Belongs to the FKBP-type PPIase family. Tig subfamily.</text>
</comment>
<dbReference type="EC" id="5.2.1.8" evidence="1"/>
<dbReference type="EMBL" id="CP000921">
    <property type="protein sequence ID" value="ACO24159.1"/>
    <property type="molecule type" value="Genomic_DNA"/>
</dbReference>
<dbReference type="RefSeq" id="WP_000116462.1">
    <property type="nucleotide sequence ID" value="NC_012469.1"/>
</dbReference>
<dbReference type="SMR" id="C1CPR1"/>
<dbReference type="KEGG" id="snt:SPT_0438"/>
<dbReference type="HOGENOM" id="CLU_033058_3_2_9"/>
<dbReference type="GO" id="GO:0005737">
    <property type="term" value="C:cytoplasm"/>
    <property type="evidence" value="ECO:0007669"/>
    <property type="project" value="UniProtKB-SubCell"/>
</dbReference>
<dbReference type="GO" id="GO:0003755">
    <property type="term" value="F:peptidyl-prolyl cis-trans isomerase activity"/>
    <property type="evidence" value="ECO:0007669"/>
    <property type="project" value="UniProtKB-UniRule"/>
</dbReference>
<dbReference type="GO" id="GO:0044183">
    <property type="term" value="F:protein folding chaperone"/>
    <property type="evidence" value="ECO:0007669"/>
    <property type="project" value="TreeGrafter"/>
</dbReference>
<dbReference type="GO" id="GO:0043022">
    <property type="term" value="F:ribosome binding"/>
    <property type="evidence" value="ECO:0007669"/>
    <property type="project" value="TreeGrafter"/>
</dbReference>
<dbReference type="GO" id="GO:0051083">
    <property type="term" value="P:'de novo' cotranslational protein folding"/>
    <property type="evidence" value="ECO:0007669"/>
    <property type="project" value="TreeGrafter"/>
</dbReference>
<dbReference type="GO" id="GO:0051301">
    <property type="term" value="P:cell division"/>
    <property type="evidence" value="ECO:0007669"/>
    <property type="project" value="UniProtKB-KW"/>
</dbReference>
<dbReference type="GO" id="GO:0061077">
    <property type="term" value="P:chaperone-mediated protein folding"/>
    <property type="evidence" value="ECO:0007669"/>
    <property type="project" value="TreeGrafter"/>
</dbReference>
<dbReference type="GO" id="GO:0015031">
    <property type="term" value="P:protein transport"/>
    <property type="evidence" value="ECO:0007669"/>
    <property type="project" value="UniProtKB-UniRule"/>
</dbReference>
<dbReference type="GO" id="GO:0043335">
    <property type="term" value="P:protein unfolding"/>
    <property type="evidence" value="ECO:0007669"/>
    <property type="project" value="TreeGrafter"/>
</dbReference>
<dbReference type="FunFam" id="3.10.50.40:FF:000001">
    <property type="entry name" value="Trigger factor"/>
    <property type="match status" value="1"/>
</dbReference>
<dbReference type="Gene3D" id="3.10.50.40">
    <property type="match status" value="1"/>
</dbReference>
<dbReference type="Gene3D" id="3.30.70.1050">
    <property type="entry name" value="Trigger factor ribosome-binding domain"/>
    <property type="match status" value="1"/>
</dbReference>
<dbReference type="Gene3D" id="1.10.3120.10">
    <property type="entry name" value="Trigger factor, C-terminal domain"/>
    <property type="match status" value="1"/>
</dbReference>
<dbReference type="HAMAP" id="MF_00303">
    <property type="entry name" value="Trigger_factor_Tig"/>
    <property type="match status" value="1"/>
</dbReference>
<dbReference type="InterPro" id="IPR046357">
    <property type="entry name" value="PPIase_dom_sf"/>
</dbReference>
<dbReference type="InterPro" id="IPR001179">
    <property type="entry name" value="PPIase_FKBP_dom"/>
</dbReference>
<dbReference type="InterPro" id="IPR005215">
    <property type="entry name" value="Trig_fac"/>
</dbReference>
<dbReference type="InterPro" id="IPR008880">
    <property type="entry name" value="Trigger_fac_C"/>
</dbReference>
<dbReference type="InterPro" id="IPR037041">
    <property type="entry name" value="Trigger_fac_C_sf"/>
</dbReference>
<dbReference type="InterPro" id="IPR008881">
    <property type="entry name" value="Trigger_fac_ribosome-bd_bac"/>
</dbReference>
<dbReference type="InterPro" id="IPR036611">
    <property type="entry name" value="Trigger_fac_ribosome-bd_sf"/>
</dbReference>
<dbReference type="InterPro" id="IPR027304">
    <property type="entry name" value="Trigger_fact/SurA_dom_sf"/>
</dbReference>
<dbReference type="NCBIfam" id="TIGR00115">
    <property type="entry name" value="tig"/>
    <property type="match status" value="1"/>
</dbReference>
<dbReference type="PANTHER" id="PTHR30560">
    <property type="entry name" value="TRIGGER FACTOR CHAPERONE AND PEPTIDYL-PROLYL CIS/TRANS ISOMERASE"/>
    <property type="match status" value="1"/>
</dbReference>
<dbReference type="PANTHER" id="PTHR30560:SF3">
    <property type="entry name" value="TRIGGER FACTOR-LIKE PROTEIN TIG, CHLOROPLASTIC"/>
    <property type="match status" value="1"/>
</dbReference>
<dbReference type="Pfam" id="PF00254">
    <property type="entry name" value="FKBP_C"/>
    <property type="match status" value="1"/>
</dbReference>
<dbReference type="Pfam" id="PF05698">
    <property type="entry name" value="Trigger_C"/>
    <property type="match status" value="1"/>
</dbReference>
<dbReference type="Pfam" id="PF05697">
    <property type="entry name" value="Trigger_N"/>
    <property type="match status" value="1"/>
</dbReference>
<dbReference type="PIRSF" id="PIRSF003095">
    <property type="entry name" value="Trigger_factor"/>
    <property type="match status" value="1"/>
</dbReference>
<dbReference type="SUPFAM" id="SSF54534">
    <property type="entry name" value="FKBP-like"/>
    <property type="match status" value="1"/>
</dbReference>
<dbReference type="SUPFAM" id="SSF109998">
    <property type="entry name" value="Triger factor/SurA peptide-binding domain-like"/>
    <property type="match status" value="1"/>
</dbReference>
<dbReference type="SUPFAM" id="SSF102735">
    <property type="entry name" value="Trigger factor ribosome-binding domain"/>
    <property type="match status" value="1"/>
</dbReference>
<dbReference type="PROSITE" id="PS50059">
    <property type="entry name" value="FKBP_PPIASE"/>
    <property type="match status" value="1"/>
</dbReference>
<feature type="chain" id="PRO_1000198182" description="Trigger factor">
    <location>
        <begin position="1"/>
        <end position="427"/>
    </location>
</feature>
<feature type="domain" description="PPIase FKBP-type" evidence="1">
    <location>
        <begin position="163"/>
        <end position="248"/>
    </location>
</feature>
<name>TIG_STRZT</name>
<reference key="1">
    <citation type="journal article" date="2010" name="Genome Biol.">
        <title>Structure and dynamics of the pan-genome of Streptococcus pneumoniae and closely related species.</title>
        <authorList>
            <person name="Donati C."/>
            <person name="Hiller N.L."/>
            <person name="Tettelin H."/>
            <person name="Muzzi A."/>
            <person name="Croucher N.J."/>
            <person name="Angiuoli S.V."/>
            <person name="Oggioni M."/>
            <person name="Dunning Hotopp J.C."/>
            <person name="Hu F.Z."/>
            <person name="Riley D.R."/>
            <person name="Covacci A."/>
            <person name="Mitchell T.J."/>
            <person name="Bentley S.D."/>
            <person name="Kilian M."/>
            <person name="Ehrlich G.D."/>
            <person name="Rappuoli R."/>
            <person name="Moxon E.R."/>
            <person name="Masignani V."/>
        </authorList>
    </citation>
    <scope>NUCLEOTIDE SEQUENCE [LARGE SCALE GENOMIC DNA]</scope>
    <source>
        <strain>Taiwan19F-14</strain>
    </source>
</reference>
<gene>
    <name evidence="1" type="primary">tig</name>
    <name type="ordered locus">SPT_0438</name>
</gene>